<comment type="function">
    <text>Confers broad-spectrum resistance to pathogens.</text>
</comment>
<comment type="subcellular location">
    <subcellularLocation>
        <location evidence="1">Secreted</location>
    </subcellularLocation>
</comment>
<comment type="similarity">
    <text evidence="3">Belongs to the DEFL family.</text>
</comment>
<gene>
    <name type="primary">PDF2.6</name>
    <name type="synonym">LCR72</name>
    <name type="ordered locus">At2g02140</name>
    <name type="ORF">F5O4.9</name>
</gene>
<evidence type="ECO:0000250" key="1"/>
<evidence type="ECO:0000255" key="2"/>
<evidence type="ECO:0000305" key="3"/>
<feature type="signal peptide" evidence="2">
    <location>
        <begin position="1"/>
        <end position="28"/>
    </location>
</feature>
<feature type="chain" id="PRO_0000007026" description="Defensin-like protein 10">
    <location>
        <begin position="29"/>
        <end position="73"/>
    </location>
</feature>
<feature type="disulfide bond" evidence="1">
    <location>
        <begin position="31"/>
        <end position="73"/>
    </location>
</feature>
<feature type="disulfide bond" evidence="1">
    <location>
        <begin position="42"/>
        <end position="62"/>
    </location>
</feature>
<feature type="disulfide bond" evidence="1">
    <location>
        <begin position="48"/>
        <end position="67"/>
    </location>
</feature>
<feature type="disulfide bond" evidence="1">
    <location>
        <begin position="52"/>
        <end position="69"/>
    </location>
</feature>
<accession>Q9ZUL8</accession>
<accession>Q0IGN8</accession>
<sequence length="73" mass="7718">MKLSLRLISALLMSVMLLFATGMGPVEARTCESPSNKFQGVCLNSQSCAKACPSEGFSGGRCSSLRCYCSKAC</sequence>
<dbReference type="EMBL" id="AC005936">
    <property type="protein sequence ID" value="AAC97220.1"/>
    <property type="molecule type" value="Genomic_DNA"/>
</dbReference>
<dbReference type="EMBL" id="CP002685">
    <property type="protein sequence ID" value="AEC05550.1"/>
    <property type="molecule type" value="Genomic_DNA"/>
</dbReference>
<dbReference type="EMBL" id="BT028882">
    <property type="protein sequence ID" value="ABI49429.1"/>
    <property type="molecule type" value="mRNA"/>
</dbReference>
<dbReference type="EMBL" id="AY087062">
    <property type="protein sequence ID" value="AAM64623.1"/>
    <property type="molecule type" value="mRNA"/>
</dbReference>
<dbReference type="PIR" id="D84433">
    <property type="entry name" value="D84433"/>
</dbReference>
<dbReference type="RefSeq" id="NP_178322.1">
    <property type="nucleotide sequence ID" value="NM_126274.3"/>
</dbReference>
<dbReference type="SMR" id="Q9ZUL8"/>
<dbReference type="BioGRID" id="148">
    <property type="interactions" value="1"/>
</dbReference>
<dbReference type="FunCoup" id="Q9ZUL8">
    <property type="interactions" value="3"/>
</dbReference>
<dbReference type="STRING" id="3702.Q9ZUL8"/>
<dbReference type="PaxDb" id="3702-AT2G02140.1"/>
<dbReference type="ProteomicsDB" id="224173"/>
<dbReference type="EnsemblPlants" id="AT2G02140.1">
    <property type="protein sequence ID" value="AT2G02140.1"/>
    <property type="gene ID" value="AT2G02140"/>
</dbReference>
<dbReference type="GeneID" id="814745"/>
<dbReference type="Gramene" id="AT2G02140.1">
    <property type="protein sequence ID" value="AT2G02140.1"/>
    <property type="gene ID" value="AT2G02140"/>
</dbReference>
<dbReference type="KEGG" id="ath:AT2G02140"/>
<dbReference type="Araport" id="AT2G02140"/>
<dbReference type="TAIR" id="AT2G02140">
    <property type="gene designation" value="LCR72"/>
</dbReference>
<dbReference type="HOGENOM" id="CLU_161668_1_2_1"/>
<dbReference type="InParanoid" id="Q9ZUL8"/>
<dbReference type="OMA" id="NKFQGVC"/>
<dbReference type="OrthoDB" id="683455at2759"/>
<dbReference type="PhylomeDB" id="Q9ZUL8"/>
<dbReference type="PRO" id="PR:Q9ZUL8"/>
<dbReference type="Proteomes" id="UP000006548">
    <property type="component" value="Chromosome 2"/>
</dbReference>
<dbReference type="ExpressionAtlas" id="Q9ZUL8">
    <property type="expression patterns" value="baseline and differential"/>
</dbReference>
<dbReference type="GO" id="GO:0005576">
    <property type="term" value="C:extracellular region"/>
    <property type="evidence" value="ECO:0007669"/>
    <property type="project" value="UniProtKB-SubCell"/>
</dbReference>
<dbReference type="GO" id="GO:0006952">
    <property type="term" value="P:defense response"/>
    <property type="evidence" value="ECO:0000250"/>
    <property type="project" value="TAIR"/>
</dbReference>
<dbReference type="GO" id="GO:0050832">
    <property type="term" value="P:defense response to fungus"/>
    <property type="evidence" value="ECO:0007669"/>
    <property type="project" value="UniProtKB-KW"/>
</dbReference>
<dbReference type="GO" id="GO:0031640">
    <property type="term" value="P:killing of cells of another organism"/>
    <property type="evidence" value="ECO:0007669"/>
    <property type="project" value="UniProtKB-KW"/>
</dbReference>
<dbReference type="CDD" id="cd00107">
    <property type="entry name" value="Knot1"/>
    <property type="match status" value="1"/>
</dbReference>
<dbReference type="Gene3D" id="3.30.30.10">
    <property type="entry name" value="Knottin, scorpion toxin-like"/>
    <property type="match status" value="1"/>
</dbReference>
<dbReference type="InterPro" id="IPR008176">
    <property type="entry name" value="Defensin_plant"/>
</dbReference>
<dbReference type="InterPro" id="IPR003614">
    <property type="entry name" value="Scorpion_toxin-like"/>
</dbReference>
<dbReference type="InterPro" id="IPR036574">
    <property type="entry name" value="Scorpion_toxin-like_sf"/>
</dbReference>
<dbReference type="PANTHER" id="PTHR33147">
    <property type="entry name" value="DEFENSIN-LIKE PROTEIN 1"/>
    <property type="match status" value="1"/>
</dbReference>
<dbReference type="PANTHER" id="PTHR33147:SF123">
    <property type="entry name" value="DEFENSIN-LIKE PROTEIN 10"/>
    <property type="match status" value="1"/>
</dbReference>
<dbReference type="Pfam" id="PF00304">
    <property type="entry name" value="Gamma-thionin"/>
    <property type="match status" value="1"/>
</dbReference>
<dbReference type="PRINTS" id="PR00288">
    <property type="entry name" value="PUROTHIONIN"/>
</dbReference>
<dbReference type="SMART" id="SM00505">
    <property type="entry name" value="Knot1"/>
    <property type="match status" value="1"/>
</dbReference>
<dbReference type="SUPFAM" id="SSF57095">
    <property type="entry name" value="Scorpion toxin-like"/>
    <property type="match status" value="1"/>
</dbReference>
<dbReference type="PROSITE" id="PS00940">
    <property type="entry name" value="GAMMA_THIONIN"/>
    <property type="match status" value="1"/>
</dbReference>
<proteinExistence type="inferred from homology"/>
<reference key="1">
    <citation type="journal article" date="1999" name="Nature">
        <title>Sequence and analysis of chromosome 2 of the plant Arabidopsis thaliana.</title>
        <authorList>
            <person name="Lin X."/>
            <person name="Kaul S."/>
            <person name="Rounsley S.D."/>
            <person name="Shea T.P."/>
            <person name="Benito M.-I."/>
            <person name="Town C.D."/>
            <person name="Fujii C.Y."/>
            <person name="Mason T.M."/>
            <person name="Bowman C.L."/>
            <person name="Barnstead M.E."/>
            <person name="Feldblyum T.V."/>
            <person name="Buell C.R."/>
            <person name="Ketchum K.A."/>
            <person name="Lee J.J."/>
            <person name="Ronning C.M."/>
            <person name="Koo H.L."/>
            <person name="Moffat K.S."/>
            <person name="Cronin L.A."/>
            <person name="Shen M."/>
            <person name="Pai G."/>
            <person name="Van Aken S."/>
            <person name="Umayam L."/>
            <person name="Tallon L.J."/>
            <person name="Gill J.E."/>
            <person name="Adams M.D."/>
            <person name="Carrera A.J."/>
            <person name="Creasy T.H."/>
            <person name="Goodman H.M."/>
            <person name="Somerville C.R."/>
            <person name="Copenhaver G.P."/>
            <person name="Preuss D."/>
            <person name="Nierman W.C."/>
            <person name="White O."/>
            <person name="Eisen J.A."/>
            <person name="Salzberg S.L."/>
            <person name="Fraser C.M."/>
            <person name="Venter J.C."/>
        </authorList>
    </citation>
    <scope>NUCLEOTIDE SEQUENCE [LARGE SCALE GENOMIC DNA]</scope>
    <source>
        <strain>cv. Columbia</strain>
    </source>
</reference>
<reference key="2">
    <citation type="journal article" date="2017" name="Plant J.">
        <title>Araport11: a complete reannotation of the Arabidopsis thaliana reference genome.</title>
        <authorList>
            <person name="Cheng C.Y."/>
            <person name="Krishnakumar V."/>
            <person name="Chan A.P."/>
            <person name="Thibaud-Nissen F."/>
            <person name="Schobel S."/>
            <person name="Town C.D."/>
        </authorList>
    </citation>
    <scope>GENOME REANNOTATION</scope>
    <source>
        <strain>cv. Columbia</strain>
    </source>
</reference>
<reference key="3">
    <citation type="submission" date="2006-09" db="EMBL/GenBank/DDBJ databases">
        <title>Arabidopsis ORF Clones.</title>
        <authorList>
            <person name="Bautista V.R."/>
            <person name="Kim C.J."/>
            <person name="Chen H."/>
            <person name="Quinitio C."/>
            <person name="Ecker J.R."/>
        </authorList>
    </citation>
    <scope>NUCLEOTIDE SEQUENCE [LARGE SCALE MRNA]</scope>
    <source>
        <strain>cv. Columbia</strain>
    </source>
</reference>
<reference key="4">
    <citation type="submission" date="2002-03" db="EMBL/GenBank/DDBJ databases">
        <title>Full-length cDNA from Arabidopsis thaliana.</title>
        <authorList>
            <person name="Brover V.V."/>
            <person name="Troukhan M.E."/>
            <person name="Alexandrov N.A."/>
            <person name="Lu Y.-P."/>
            <person name="Flavell R.B."/>
            <person name="Feldmann K.A."/>
        </authorList>
    </citation>
    <scope>NUCLEOTIDE SEQUENCE [LARGE SCALE MRNA]</scope>
</reference>
<reference key="5">
    <citation type="journal article" date="2001" name="Plant Mol. Biol.">
        <title>Two large Arabidopsis thaliana gene families are homologous to the Brassica gene superfamily that encodes pollen coat proteins and the male component of the self-incompatibility response.</title>
        <authorList>
            <person name="Vanoosthuyse V."/>
            <person name="Miege C."/>
            <person name="Dumas C."/>
            <person name="Cock J.M."/>
        </authorList>
    </citation>
    <scope>IDENTIFICATION</scope>
</reference>
<reference key="6">
    <citation type="journal article" date="2002" name="Planta">
        <title>Plant defensins.</title>
        <authorList>
            <person name="Thomma B.P.H.J."/>
            <person name="Cammue B.P."/>
            <person name="Thevissen K."/>
        </authorList>
    </citation>
    <scope>GENE FAMILY</scope>
    <scope>NOMENCLATURE</scope>
</reference>
<reference key="7">
    <citation type="journal article" date="2005" name="Plant Physiol.">
        <title>Genome organization of more than 300 defensin-like genes in Arabidopsis.</title>
        <authorList>
            <person name="Silverstein K.A.T."/>
            <person name="Graham M.A."/>
            <person name="Paape T.D."/>
            <person name="VandenBosch K.A."/>
        </authorList>
    </citation>
    <scope>GENE FAMILY</scope>
</reference>
<protein>
    <recommendedName>
        <fullName>Defensin-like protein 10</fullName>
    </recommendedName>
    <alternativeName>
        <fullName>Low-molecular-weight cysteine-rich protein 72</fullName>
        <shortName>Protein LCR72</shortName>
    </alternativeName>
    <alternativeName>
        <fullName>Plant defensin 2.6</fullName>
    </alternativeName>
</protein>
<keyword id="KW-0929">Antimicrobial</keyword>
<keyword id="KW-1015">Disulfide bond</keyword>
<keyword id="KW-0295">Fungicide</keyword>
<keyword id="KW-0611">Plant defense</keyword>
<keyword id="KW-1185">Reference proteome</keyword>
<keyword id="KW-0964">Secreted</keyword>
<keyword id="KW-0732">Signal</keyword>
<organism>
    <name type="scientific">Arabidopsis thaliana</name>
    <name type="common">Mouse-ear cress</name>
    <dbReference type="NCBI Taxonomy" id="3702"/>
    <lineage>
        <taxon>Eukaryota</taxon>
        <taxon>Viridiplantae</taxon>
        <taxon>Streptophyta</taxon>
        <taxon>Embryophyta</taxon>
        <taxon>Tracheophyta</taxon>
        <taxon>Spermatophyta</taxon>
        <taxon>Magnoliopsida</taxon>
        <taxon>eudicotyledons</taxon>
        <taxon>Gunneridae</taxon>
        <taxon>Pentapetalae</taxon>
        <taxon>rosids</taxon>
        <taxon>malvids</taxon>
        <taxon>Brassicales</taxon>
        <taxon>Brassicaceae</taxon>
        <taxon>Camelineae</taxon>
        <taxon>Arabidopsis</taxon>
    </lineage>
</organism>
<name>DEF10_ARATH</name>